<reference key="1">
    <citation type="journal article" date="2005" name="Nature">
        <title>Genome sequencing and analysis of Aspergillus oryzae.</title>
        <authorList>
            <person name="Machida M."/>
            <person name="Asai K."/>
            <person name="Sano M."/>
            <person name="Tanaka T."/>
            <person name="Kumagai T."/>
            <person name="Terai G."/>
            <person name="Kusumoto K."/>
            <person name="Arima T."/>
            <person name="Akita O."/>
            <person name="Kashiwagi Y."/>
            <person name="Abe K."/>
            <person name="Gomi K."/>
            <person name="Horiuchi H."/>
            <person name="Kitamoto K."/>
            <person name="Kobayashi T."/>
            <person name="Takeuchi M."/>
            <person name="Denning D.W."/>
            <person name="Galagan J.E."/>
            <person name="Nierman W.C."/>
            <person name="Yu J."/>
            <person name="Archer D.B."/>
            <person name="Bennett J.W."/>
            <person name="Bhatnagar D."/>
            <person name="Cleveland T.E."/>
            <person name="Fedorova N.D."/>
            <person name="Gotoh O."/>
            <person name="Horikawa H."/>
            <person name="Hosoyama A."/>
            <person name="Ichinomiya M."/>
            <person name="Igarashi R."/>
            <person name="Iwashita K."/>
            <person name="Juvvadi P.R."/>
            <person name="Kato M."/>
            <person name="Kato Y."/>
            <person name="Kin T."/>
            <person name="Kokubun A."/>
            <person name="Maeda H."/>
            <person name="Maeyama N."/>
            <person name="Maruyama J."/>
            <person name="Nagasaki H."/>
            <person name="Nakajima T."/>
            <person name="Oda K."/>
            <person name="Okada K."/>
            <person name="Paulsen I."/>
            <person name="Sakamoto K."/>
            <person name="Sawano T."/>
            <person name="Takahashi M."/>
            <person name="Takase K."/>
            <person name="Terabayashi Y."/>
            <person name="Wortman J.R."/>
            <person name="Yamada O."/>
            <person name="Yamagata Y."/>
            <person name="Anazawa H."/>
            <person name="Hata Y."/>
            <person name="Koide Y."/>
            <person name="Komori T."/>
            <person name="Koyama Y."/>
            <person name="Minetoki T."/>
            <person name="Suharnan S."/>
            <person name="Tanaka A."/>
            <person name="Isono K."/>
            <person name="Kuhara S."/>
            <person name="Ogasawara N."/>
            <person name="Kikuchi H."/>
        </authorList>
    </citation>
    <scope>NUCLEOTIDE SEQUENCE [LARGE SCALE GENOMIC DNA]</scope>
    <source>
        <strain>ATCC 42149 / RIB 40</strain>
    </source>
</reference>
<accession>Q2UT06</accession>
<name>AGALA_ASPOR</name>
<keyword id="KW-1015">Disulfide bond</keyword>
<keyword id="KW-0325">Glycoprotein</keyword>
<keyword id="KW-0326">Glycosidase</keyword>
<keyword id="KW-0378">Hydrolase</keyword>
<keyword id="KW-0430">Lectin</keyword>
<keyword id="KW-1185">Reference proteome</keyword>
<keyword id="KW-0964">Secreted</keyword>
<keyword id="KW-0732">Signal</keyword>
<organism>
    <name type="scientific">Aspergillus oryzae (strain ATCC 42149 / RIB 40)</name>
    <name type="common">Yellow koji mold</name>
    <dbReference type="NCBI Taxonomy" id="510516"/>
    <lineage>
        <taxon>Eukaryota</taxon>
        <taxon>Fungi</taxon>
        <taxon>Dikarya</taxon>
        <taxon>Ascomycota</taxon>
        <taxon>Pezizomycotina</taxon>
        <taxon>Eurotiomycetes</taxon>
        <taxon>Eurotiomycetidae</taxon>
        <taxon>Eurotiales</taxon>
        <taxon>Aspergillaceae</taxon>
        <taxon>Aspergillus</taxon>
        <taxon>Aspergillus subgen. Circumdati</taxon>
    </lineage>
</organism>
<feature type="signal peptide" evidence="2">
    <location>
        <begin position="1"/>
        <end position="25"/>
    </location>
</feature>
<feature type="chain" id="PRO_0000393210" description="Probable alpha-galactosidase A">
    <location>
        <begin position="26"/>
        <end position="534"/>
    </location>
</feature>
<feature type="domain" description="Ricin B-type lectin" evidence="3">
    <location>
        <begin position="413"/>
        <end position="534"/>
    </location>
</feature>
<feature type="active site" description="Nucleophile" evidence="1">
    <location>
        <position position="155"/>
    </location>
</feature>
<feature type="active site" description="Proton donor" evidence="1">
    <location>
        <position position="213"/>
    </location>
</feature>
<feature type="glycosylation site" description="N-linked (GlcNAc...) asparagine" evidence="2">
    <location>
        <position position="50"/>
    </location>
</feature>
<feature type="glycosylation site" description="N-linked (GlcNAc...) asparagine" evidence="2">
    <location>
        <position position="88"/>
    </location>
</feature>
<feature type="glycosylation site" description="N-linked (GlcNAc...) asparagine" evidence="2">
    <location>
        <position position="94"/>
    </location>
</feature>
<feature type="glycosylation site" description="N-linked (GlcNAc...) asparagine" evidence="2">
    <location>
        <position position="124"/>
    </location>
</feature>
<feature type="glycosylation site" description="N-linked (GlcNAc...) asparagine" evidence="2">
    <location>
        <position position="204"/>
    </location>
</feature>
<feature type="glycosylation site" description="N-linked (GlcNAc...) asparagine" evidence="2">
    <location>
        <position position="444"/>
    </location>
</feature>
<feature type="disulfide bond" evidence="3">
    <location>
        <begin position="47"/>
        <end position="79"/>
    </location>
</feature>
<feature type="disulfide bond" evidence="3">
    <location>
        <begin position="127"/>
        <end position="157"/>
    </location>
</feature>
<feature type="disulfide bond" evidence="3">
    <location>
        <begin position="430"/>
        <end position="443"/>
    </location>
</feature>
<feature type="disulfide bond" evidence="3">
    <location>
        <begin position="468"/>
        <end position="481"/>
    </location>
</feature>
<gene>
    <name type="primary">aglA</name>
    <name type="ORF">AO090005000217</name>
</gene>
<evidence type="ECO:0000250" key="1"/>
<evidence type="ECO:0000255" key="2"/>
<evidence type="ECO:0000255" key="3">
    <source>
        <dbReference type="PROSITE-ProRule" id="PRU00174"/>
    </source>
</evidence>
<evidence type="ECO:0000305" key="4"/>
<sequence>MRLITRWIPLANALASTMPVQVVASIENPSLLPTPPMGFNNWARFMCDLNETLFVETTDAMASNGLLEAGYNRINLDDCWMNYDRAENGSLEWNVTKFPRGLPWLGQYVKSKGFNFGIYEDSGNLTCGGYPGSEGYEEIDAEIFAAWGIDYLKLDGCNVYPKEGRTLQEEYKYLYGNWHEILSKMQQPLIFSESAPAYFSMTDNLTDWHTVMDWVPEYGELARHSVDILVYSGEGSAWDSIMTNYKFNTLVARYQRPGYYNDPDFLIADHPGLSLDEKRSQFALWASFSAPLIISAHIPDLSSEDLEYLTNQALIAVDQDPLAQQATLASRDGSLDVLTRNLADGSRLVTILNHGSESIETDISLDILGLSTDCTYKAQDLWGGSTQTIKDAIRIKLNTHATAVYKIDTDEKCSQVIPTGLIFNTASGKCLTGTSSSVGSESCNGSKSQIWQIDASGVIRTLSEQSKCLTADGKAISLQECSENNGQKWSYAITGNLKNADTGYCLTNGGGVSACGFETNSQVFGLPAGVHVAL</sequence>
<dbReference type="EC" id="3.2.1.22"/>
<dbReference type="EMBL" id="BA000049">
    <property type="protein sequence ID" value="BAE55309.1"/>
    <property type="molecule type" value="Genomic_DNA"/>
</dbReference>
<dbReference type="RefSeq" id="XP_001817311.1">
    <property type="nucleotide sequence ID" value="XM_001817259.1"/>
</dbReference>
<dbReference type="SMR" id="Q2UT06"/>
<dbReference type="STRING" id="510516.Q2UT06"/>
<dbReference type="CAZy" id="CBM13">
    <property type="family name" value="Carbohydrate-Binding Module Family 13"/>
</dbReference>
<dbReference type="CAZy" id="GH27">
    <property type="family name" value="Glycoside Hydrolase Family 27"/>
</dbReference>
<dbReference type="GlyCosmos" id="Q2UT06">
    <property type="glycosylation" value="6 sites, No reported glycans"/>
</dbReference>
<dbReference type="EnsemblFungi" id="BAE55309">
    <property type="protein sequence ID" value="BAE55309"/>
    <property type="gene ID" value="AO090005000217"/>
</dbReference>
<dbReference type="GeneID" id="5989256"/>
<dbReference type="KEGG" id="aor:AO090005000217"/>
<dbReference type="VEuPathDB" id="FungiDB:AO090005000217"/>
<dbReference type="HOGENOM" id="CLU_013093_3_3_1"/>
<dbReference type="OMA" id="NWARFMC"/>
<dbReference type="OrthoDB" id="71800at5052"/>
<dbReference type="Proteomes" id="UP000006564">
    <property type="component" value="Chromosome 1"/>
</dbReference>
<dbReference type="GO" id="GO:0005576">
    <property type="term" value="C:extracellular region"/>
    <property type="evidence" value="ECO:0007669"/>
    <property type="project" value="UniProtKB-SubCell"/>
</dbReference>
<dbReference type="GO" id="GO:0004557">
    <property type="term" value="F:alpha-galactosidase activity"/>
    <property type="evidence" value="ECO:0007669"/>
    <property type="project" value="UniProtKB-EC"/>
</dbReference>
<dbReference type="GO" id="GO:0030246">
    <property type="term" value="F:carbohydrate binding"/>
    <property type="evidence" value="ECO:0007669"/>
    <property type="project" value="UniProtKB-KW"/>
</dbReference>
<dbReference type="GO" id="GO:0005975">
    <property type="term" value="P:carbohydrate metabolic process"/>
    <property type="evidence" value="ECO:0007669"/>
    <property type="project" value="InterPro"/>
</dbReference>
<dbReference type="CDD" id="cd23425">
    <property type="entry name" value="beta-trefoil_Ricin_AglA"/>
    <property type="match status" value="1"/>
</dbReference>
<dbReference type="CDD" id="cd14792">
    <property type="entry name" value="GH27"/>
    <property type="match status" value="1"/>
</dbReference>
<dbReference type="FunFam" id="3.20.20.70:FF:000177">
    <property type="entry name" value="Alpha-galactosidase"/>
    <property type="match status" value="1"/>
</dbReference>
<dbReference type="Gene3D" id="2.80.10.50">
    <property type="match status" value="1"/>
</dbReference>
<dbReference type="Gene3D" id="3.20.20.70">
    <property type="entry name" value="Aldolase class I"/>
    <property type="match status" value="1"/>
</dbReference>
<dbReference type="Gene3D" id="2.60.40.1180">
    <property type="entry name" value="Golgi alpha-mannosidase II"/>
    <property type="match status" value="1"/>
</dbReference>
<dbReference type="InterPro" id="IPR013785">
    <property type="entry name" value="Aldolase_TIM"/>
</dbReference>
<dbReference type="InterPro" id="IPR002241">
    <property type="entry name" value="Glyco_hydro_27"/>
</dbReference>
<dbReference type="InterPro" id="IPR013780">
    <property type="entry name" value="Glyco_hydro_b"/>
</dbReference>
<dbReference type="InterPro" id="IPR017853">
    <property type="entry name" value="Glycoside_hydrolase_SF"/>
</dbReference>
<dbReference type="InterPro" id="IPR041233">
    <property type="entry name" value="Melibiase_C"/>
</dbReference>
<dbReference type="InterPro" id="IPR035992">
    <property type="entry name" value="Ricin_B-like_lectins"/>
</dbReference>
<dbReference type="InterPro" id="IPR000772">
    <property type="entry name" value="Ricin_B_lectin"/>
</dbReference>
<dbReference type="PANTHER" id="PTHR11452:SF91">
    <property type="entry name" value="ALPHA-GALACTOSIDASE A-RELATED"/>
    <property type="match status" value="1"/>
</dbReference>
<dbReference type="PANTHER" id="PTHR11452">
    <property type="entry name" value="ALPHA-GALACTOSIDASE/ALPHA-N-ACETYLGALACTOSAMINIDASE"/>
    <property type="match status" value="1"/>
</dbReference>
<dbReference type="Pfam" id="PF16499">
    <property type="entry name" value="Melibiase_2"/>
    <property type="match status" value="1"/>
</dbReference>
<dbReference type="Pfam" id="PF17801">
    <property type="entry name" value="Melibiase_C"/>
    <property type="match status" value="1"/>
</dbReference>
<dbReference type="Pfam" id="PF00652">
    <property type="entry name" value="Ricin_B_lectin"/>
    <property type="match status" value="1"/>
</dbReference>
<dbReference type="PRINTS" id="PR00740">
    <property type="entry name" value="GLHYDRLASE27"/>
</dbReference>
<dbReference type="SMART" id="SM00458">
    <property type="entry name" value="RICIN"/>
    <property type="match status" value="1"/>
</dbReference>
<dbReference type="SUPFAM" id="SSF51445">
    <property type="entry name" value="(Trans)glycosidases"/>
    <property type="match status" value="1"/>
</dbReference>
<dbReference type="SUPFAM" id="SSF51011">
    <property type="entry name" value="Glycosyl hydrolase domain"/>
    <property type="match status" value="1"/>
</dbReference>
<dbReference type="SUPFAM" id="SSF50370">
    <property type="entry name" value="Ricin B-like lectins"/>
    <property type="match status" value="1"/>
</dbReference>
<dbReference type="PROSITE" id="PS50231">
    <property type="entry name" value="RICIN_B_LECTIN"/>
    <property type="match status" value="1"/>
</dbReference>
<protein>
    <recommendedName>
        <fullName>Probable alpha-galactosidase A</fullName>
        <ecNumber>3.2.1.22</ecNumber>
    </recommendedName>
    <alternativeName>
        <fullName>Melibiase A</fullName>
    </alternativeName>
</protein>
<proteinExistence type="inferred from homology"/>
<comment type="function">
    <text evidence="1">Hydrolyzes a variety of simple alpha-D-galactoside as well as more complex molecules such as oligosaccharides and polysaccharides.</text>
</comment>
<comment type="catalytic activity">
    <reaction>
        <text>Hydrolysis of terminal, non-reducing alpha-D-galactose residues in alpha-D-galactosides, including galactose oligosaccharides, galactomannans and galactolipids.</text>
        <dbReference type="EC" id="3.2.1.22"/>
    </reaction>
</comment>
<comment type="subcellular location">
    <subcellularLocation>
        <location evidence="1">Secreted</location>
    </subcellularLocation>
</comment>
<comment type="similarity">
    <text evidence="4">Belongs to the glycosyl hydrolase 27 family.</text>
</comment>